<evidence type="ECO:0000255" key="1">
    <source>
        <dbReference type="HAMAP-Rule" id="MF_00092"/>
    </source>
</evidence>
<sequence>MNKKILETLEFDKVKALFEPHLLTEQGLEQLRQLAPTAKADKIKQAFAEMKEMQALFVEQPHFTILSTKEIAGVCKRLEMGADLNIEEFLLLKRVLLASRELQSFYANLENVSLEELAFWFEKLHDFPQLQGNLQAFNDAGFIENFASEELARIRRKIHDSESQVRDVLQDLLKQKAQMLTEGIVASRNGRQVLPVKNTYRNKIAGVVHDISASGNTVYIEPREVVKLSEEIASLRADERYEMLRILQEISERVRPHAAEIANDAWIIGHLDLIRAKVRFIQERQAVVPQLSENQEIQLLHVCHPLVKNAVANDVHFGQDLTAIVITGPNTGGKTIMLKTLGLTQVMAQSGLPILADKGSRVGIFEEIFADIGDEQSIEQSLSTFSSHMTNIVDILGKVNQHSLLLLDELGAGTDPQEGAALAMAILEDLRLRQIKTMATTHYPELKAYGIETAFVQNASMEFDTATLRPTYRFMQGVPGRSNAFEIAKRLGLSEVIVGDASQQIDQDNDVNRIIEQLEEQTLESRKRLDNIREVEQENLKMNRALKKLYNELNREKETELNKAREQAAEIVDMALSESDQILKNLHSKSQLKPHEIIEAKAKLKKLAPEKVDLSKNKVLQKAKKKRAPKVGDDIVVLSYGQRGTLTSQLKDGRWEAQVGLIKMTLEEKEFDLVQAQQEKPVKKKQVNVVKRTSGRGPQARLDLRGKRYEEAMNELDTFIDQALLNNMAQVDIIHGIGTGVIREGVTKYLQRNKHVKSFGYAPQNAGGSGATIVTFKG</sequence>
<name>MUTS2_STRP4</name>
<dbReference type="EC" id="3.1.-.-" evidence="1"/>
<dbReference type="EC" id="3.6.4.-" evidence="1"/>
<dbReference type="EMBL" id="CP001015">
    <property type="protein sequence ID" value="ACF56110.1"/>
    <property type="molecule type" value="Genomic_DNA"/>
</dbReference>
<dbReference type="SMR" id="B5E7E8"/>
<dbReference type="KEGG" id="spx:SPG_0373"/>
<dbReference type="HOGENOM" id="CLU_011252_2_1_9"/>
<dbReference type="GO" id="GO:0005524">
    <property type="term" value="F:ATP binding"/>
    <property type="evidence" value="ECO:0007669"/>
    <property type="project" value="UniProtKB-UniRule"/>
</dbReference>
<dbReference type="GO" id="GO:0016887">
    <property type="term" value="F:ATP hydrolysis activity"/>
    <property type="evidence" value="ECO:0007669"/>
    <property type="project" value="InterPro"/>
</dbReference>
<dbReference type="GO" id="GO:0140664">
    <property type="term" value="F:ATP-dependent DNA damage sensor activity"/>
    <property type="evidence" value="ECO:0007669"/>
    <property type="project" value="InterPro"/>
</dbReference>
<dbReference type="GO" id="GO:0004519">
    <property type="term" value="F:endonuclease activity"/>
    <property type="evidence" value="ECO:0007669"/>
    <property type="project" value="UniProtKB-UniRule"/>
</dbReference>
<dbReference type="GO" id="GO:0030983">
    <property type="term" value="F:mismatched DNA binding"/>
    <property type="evidence" value="ECO:0007669"/>
    <property type="project" value="InterPro"/>
</dbReference>
<dbReference type="GO" id="GO:0043023">
    <property type="term" value="F:ribosomal large subunit binding"/>
    <property type="evidence" value="ECO:0007669"/>
    <property type="project" value="UniProtKB-UniRule"/>
</dbReference>
<dbReference type="GO" id="GO:0019843">
    <property type="term" value="F:rRNA binding"/>
    <property type="evidence" value="ECO:0007669"/>
    <property type="project" value="UniProtKB-UniRule"/>
</dbReference>
<dbReference type="GO" id="GO:0006298">
    <property type="term" value="P:mismatch repair"/>
    <property type="evidence" value="ECO:0007669"/>
    <property type="project" value="InterPro"/>
</dbReference>
<dbReference type="GO" id="GO:0045910">
    <property type="term" value="P:negative regulation of DNA recombination"/>
    <property type="evidence" value="ECO:0007669"/>
    <property type="project" value="InterPro"/>
</dbReference>
<dbReference type="GO" id="GO:0072344">
    <property type="term" value="P:rescue of stalled ribosome"/>
    <property type="evidence" value="ECO:0007669"/>
    <property type="project" value="UniProtKB-UniRule"/>
</dbReference>
<dbReference type="FunFam" id="3.30.1370.110:FF:000005">
    <property type="entry name" value="Endonuclease MutS2"/>
    <property type="match status" value="1"/>
</dbReference>
<dbReference type="FunFam" id="3.40.50.300:FF:000830">
    <property type="entry name" value="Endonuclease MutS2"/>
    <property type="match status" value="1"/>
</dbReference>
<dbReference type="Gene3D" id="3.30.1370.110">
    <property type="match status" value="1"/>
</dbReference>
<dbReference type="Gene3D" id="3.40.50.300">
    <property type="entry name" value="P-loop containing nucleotide triphosphate hydrolases"/>
    <property type="match status" value="1"/>
</dbReference>
<dbReference type="HAMAP" id="MF_00092">
    <property type="entry name" value="MutS2"/>
    <property type="match status" value="1"/>
</dbReference>
<dbReference type="InterPro" id="IPR000432">
    <property type="entry name" value="DNA_mismatch_repair_MutS_C"/>
</dbReference>
<dbReference type="InterPro" id="IPR007696">
    <property type="entry name" value="DNA_mismatch_repair_MutS_core"/>
</dbReference>
<dbReference type="InterPro" id="IPR036187">
    <property type="entry name" value="DNA_mismatch_repair_MutS_sf"/>
</dbReference>
<dbReference type="InterPro" id="IPR046893">
    <property type="entry name" value="MSSS"/>
</dbReference>
<dbReference type="InterPro" id="IPR045076">
    <property type="entry name" value="MutS"/>
</dbReference>
<dbReference type="InterPro" id="IPR005747">
    <property type="entry name" value="MutS2"/>
</dbReference>
<dbReference type="InterPro" id="IPR027417">
    <property type="entry name" value="P-loop_NTPase"/>
</dbReference>
<dbReference type="InterPro" id="IPR002625">
    <property type="entry name" value="Smr_dom"/>
</dbReference>
<dbReference type="InterPro" id="IPR036063">
    <property type="entry name" value="Smr_dom_sf"/>
</dbReference>
<dbReference type="NCBIfam" id="TIGR01069">
    <property type="entry name" value="mutS2"/>
    <property type="match status" value="1"/>
</dbReference>
<dbReference type="PANTHER" id="PTHR48466">
    <property type="entry name" value="OS10G0509000 PROTEIN-RELATED"/>
    <property type="match status" value="1"/>
</dbReference>
<dbReference type="PANTHER" id="PTHR48466:SF1">
    <property type="entry name" value="SMR DOMAIN-CONTAINING PROTEIN"/>
    <property type="match status" value="1"/>
</dbReference>
<dbReference type="Pfam" id="PF20297">
    <property type="entry name" value="MSSS"/>
    <property type="match status" value="1"/>
</dbReference>
<dbReference type="Pfam" id="PF00488">
    <property type="entry name" value="MutS_V"/>
    <property type="match status" value="1"/>
</dbReference>
<dbReference type="Pfam" id="PF01713">
    <property type="entry name" value="Smr"/>
    <property type="match status" value="1"/>
</dbReference>
<dbReference type="PIRSF" id="PIRSF005814">
    <property type="entry name" value="MutS_YshD"/>
    <property type="match status" value="1"/>
</dbReference>
<dbReference type="SMART" id="SM00534">
    <property type="entry name" value="MUTSac"/>
    <property type="match status" value="1"/>
</dbReference>
<dbReference type="SMART" id="SM00533">
    <property type="entry name" value="MUTSd"/>
    <property type="match status" value="1"/>
</dbReference>
<dbReference type="SMART" id="SM00463">
    <property type="entry name" value="SMR"/>
    <property type="match status" value="1"/>
</dbReference>
<dbReference type="SUPFAM" id="SSF48334">
    <property type="entry name" value="DNA repair protein MutS, domain III"/>
    <property type="match status" value="1"/>
</dbReference>
<dbReference type="SUPFAM" id="SSF52540">
    <property type="entry name" value="P-loop containing nucleoside triphosphate hydrolases"/>
    <property type="match status" value="1"/>
</dbReference>
<dbReference type="SUPFAM" id="SSF160443">
    <property type="entry name" value="SMR domain-like"/>
    <property type="match status" value="1"/>
</dbReference>
<dbReference type="PROSITE" id="PS00486">
    <property type="entry name" value="DNA_MISMATCH_REPAIR_2"/>
    <property type="match status" value="1"/>
</dbReference>
<dbReference type="PROSITE" id="PS50828">
    <property type="entry name" value="SMR"/>
    <property type="match status" value="1"/>
</dbReference>
<protein>
    <recommendedName>
        <fullName evidence="1">Endonuclease MutS2</fullName>
        <ecNumber evidence="1">3.1.-.-</ecNumber>
    </recommendedName>
    <alternativeName>
        <fullName evidence="1">Ribosome-associated protein quality control-upstream factor</fullName>
        <shortName evidence="1">RQC-upstream factor</shortName>
        <shortName evidence="1">RqcU</shortName>
        <ecNumber evidence="1">3.6.4.-</ecNumber>
    </alternativeName>
</protein>
<gene>
    <name evidence="1" type="primary">mutS2</name>
    <name evidence="1" type="synonym">rqcU</name>
    <name type="ordered locus">SPG_0373</name>
</gene>
<comment type="function">
    <text evidence="1">Endonuclease that is involved in the suppression of homologous recombination and thus may have a key role in the control of bacterial genetic diversity.</text>
</comment>
<comment type="function">
    <text evidence="1">Acts as a ribosome collision sensor, splitting the ribosome into its 2 subunits. Detects stalled/collided 70S ribosomes which it binds and splits by an ATP-hydrolysis driven conformational change. Acts upstream of the ribosome quality control system (RQC), a ribosome-associated complex that mediates the extraction of incompletely synthesized nascent chains from stalled ribosomes and their subsequent degradation. Probably generates substrates for RQC.</text>
</comment>
<comment type="subunit">
    <text evidence="1">Homodimer. Binds to stalled ribosomes, contacting rRNA.</text>
</comment>
<comment type="similarity">
    <text evidence="1">Belongs to the DNA mismatch repair MutS family. MutS2 subfamily.</text>
</comment>
<feature type="chain" id="PRO_1000093394" description="Endonuclease MutS2">
    <location>
        <begin position="1"/>
        <end position="778"/>
    </location>
</feature>
<feature type="domain" description="Smr" evidence="1">
    <location>
        <begin position="702"/>
        <end position="777"/>
    </location>
</feature>
<feature type="binding site" evidence="1">
    <location>
        <begin position="328"/>
        <end position="335"/>
    </location>
    <ligand>
        <name>ATP</name>
        <dbReference type="ChEBI" id="CHEBI:30616"/>
    </ligand>
</feature>
<keyword id="KW-0067">ATP-binding</keyword>
<keyword id="KW-0238">DNA-binding</keyword>
<keyword id="KW-0255">Endonuclease</keyword>
<keyword id="KW-0378">Hydrolase</keyword>
<keyword id="KW-0540">Nuclease</keyword>
<keyword id="KW-0547">Nucleotide-binding</keyword>
<keyword id="KW-0694">RNA-binding</keyword>
<keyword id="KW-0699">rRNA-binding</keyword>
<proteinExistence type="inferred from homology"/>
<accession>B5E7E8</accession>
<organism>
    <name type="scientific">Streptococcus pneumoniae serotype 19F (strain G54)</name>
    <dbReference type="NCBI Taxonomy" id="512566"/>
    <lineage>
        <taxon>Bacteria</taxon>
        <taxon>Bacillati</taxon>
        <taxon>Bacillota</taxon>
        <taxon>Bacilli</taxon>
        <taxon>Lactobacillales</taxon>
        <taxon>Streptococcaceae</taxon>
        <taxon>Streptococcus</taxon>
    </lineage>
</organism>
<reference key="1">
    <citation type="journal article" date="2001" name="Microb. Drug Resist.">
        <title>Annotated draft genomic sequence from a Streptococcus pneumoniae type 19F clinical isolate.</title>
        <authorList>
            <person name="Dopazo J."/>
            <person name="Mendoza A."/>
            <person name="Herrero J."/>
            <person name="Caldara F."/>
            <person name="Humbert Y."/>
            <person name="Friedli L."/>
            <person name="Guerrier M."/>
            <person name="Grand-Schenk E."/>
            <person name="Gandin C."/>
            <person name="de Francesco M."/>
            <person name="Polissi A."/>
            <person name="Buell G."/>
            <person name="Feger G."/>
            <person name="Garcia E."/>
            <person name="Peitsch M."/>
            <person name="Garcia-Bustos J.F."/>
        </authorList>
    </citation>
    <scope>NUCLEOTIDE SEQUENCE [LARGE SCALE GENOMIC DNA]</scope>
    <source>
        <strain>G54</strain>
    </source>
</reference>
<reference key="2">
    <citation type="submission" date="2008-03" db="EMBL/GenBank/DDBJ databases">
        <title>Pneumococcal beta glucoside metabolism investigated by whole genome comparison.</title>
        <authorList>
            <person name="Mulas L."/>
            <person name="Trappetti C."/>
            <person name="Hakenbeck R."/>
            <person name="Iannelli F."/>
            <person name="Pozzi G."/>
            <person name="Davidsen T.M."/>
            <person name="Tettelin H."/>
            <person name="Oggioni M."/>
        </authorList>
    </citation>
    <scope>NUCLEOTIDE SEQUENCE [LARGE SCALE GENOMIC DNA]</scope>
    <source>
        <strain>G54</strain>
    </source>
</reference>